<reference key="1">
    <citation type="journal article" date="2006" name="Proc. Natl. Acad. Sci. U.S.A.">
        <title>Identification of genes subject to positive selection in uropathogenic strains of Escherichia coli: a comparative genomics approach.</title>
        <authorList>
            <person name="Chen S.L."/>
            <person name="Hung C.-S."/>
            <person name="Xu J."/>
            <person name="Reigstad C.S."/>
            <person name="Magrini V."/>
            <person name="Sabo A."/>
            <person name="Blasiar D."/>
            <person name="Bieri T."/>
            <person name="Meyer R.R."/>
            <person name="Ozersky P."/>
            <person name="Armstrong J.R."/>
            <person name="Fulton R.S."/>
            <person name="Latreille J.P."/>
            <person name="Spieth J."/>
            <person name="Hooton T.M."/>
            <person name="Mardis E.R."/>
            <person name="Hultgren S.J."/>
            <person name="Gordon J.I."/>
        </authorList>
    </citation>
    <scope>NUCLEOTIDE SEQUENCE [LARGE SCALE GENOMIC DNA]</scope>
    <source>
        <strain>UTI89 / UPEC</strain>
    </source>
</reference>
<accession>Q1RA49</accession>
<name>HIS4_ECOUT</name>
<comment type="catalytic activity">
    <reaction evidence="1">
        <text>1-(5-phospho-beta-D-ribosyl)-5-[(5-phospho-beta-D-ribosylamino)methylideneamino]imidazole-4-carboxamide = 5-[(5-phospho-1-deoxy-D-ribulos-1-ylimino)methylamino]-1-(5-phospho-beta-D-ribosyl)imidazole-4-carboxamide</text>
        <dbReference type="Rhea" id="RHEA:15469"/>
        <dbReference type="ChEBI" id="CHEBI:58435"/>
        <dbReference type="ChEBI" id="CHEBI:58525"/>
        <dbReference type="EC" id="5.3.1.16"/>
    </reaction>
</comment>
<comment type="pathway">
    <text evidence="1">Amino-acid biosynthesis; L-histidine biosynthesis; L-histidine from 5-phospho-alpha-D-ribose 1-diphosphate: step 4/9.</text>
</comment>
<comment type="subcellular location">
    <subcellularLocation>
        <location evidence="1">Cytoplasm</location>
    </subcellularLocation>
</comment>
<comment type="similarity">
    <text evidence="1">Belongs to the HisA/HisF family.</text>
</comment>
<comment type="sequence caution" evidence="2">
    <conflict type="erroneous initiation">
        <sequence resource="EMBL-CDS" id="ABE07765"/>
    </conflict>
</comment>
<sequence length="245" mass="26013">MIIPALDLIDGTVVRLHQGDYGKQRDYGNNPLPRLQDYAAQGAEVLHLVDLTGAKDPAKRQIPLIKTLVAGVNVPVQVGGGVRSEKDVAALLEAGVARVVVGSTAVKSPEMVKGWFERFGADALVLALDVRIDEQGNKQVAVSGWQENSGVSLEQLVETYLPVGLKHVLCTDISRDGTLAGSNVSLYEEVCARYPQVAFQSSGGIGDINDVAALRGTGVRGVIVGRALLEGKFTVKEAIACWQNA</sequence>
<proteinExistence type="inferred from homology"/>
<keyword id="KW-0028">Amino-acid biosynthesis</keyword>
<keyword id="KW-0963">Cytoplasm</keyword>
<keyword id="KW-0368">Histidine biosynthesis</keyword>
<keyword id="KW-0413">Isomerase</keyword>
<gene>
    <name evidence="1" type="primary">hisA</name>
    <name type="ordered locus">UTI89_C2297</name>
</gene>
<dbReference type="EC" id="5.3.1.16" evidence="1"/>
<dbReference type="EMBL" id="CP000243">
    <property type="protein sequence ID" value="ABE07765.1"/>
    <property type="status" value="ALT_INIT"/>
    <property type="molecule type" value="Genomic_DNA"/>
</dbReference>
<dbReference type="RefSeq" id="WP_000586497.1">
    <property type="nucleotide sequence ID" value="NZ_CP064825.1"/>
</dbReference>
<dbReference type="SMR" id="Q1RA49"/>
<dbReference type="KEGG" id="eci:UTI89_C2297"/>
<dbReference type="HOGENOM" id="CLU_048577_1_2_6"/>
<dbReference type="UniPathway" id="UPA00031">
    <property type="reaction ID" value="UER00009"/>
</dbReference>
<dbReference type="Proteomes" id="UP000001952">
    <property type="component" value="Chromosome"/>
</dbReference>
<dbReference type="GO" id="GO:0005737">
    <property type="term" value="C:cytoplasm"/>
    <property type="evidence" value="ECO:0007669"/>
    <property type="project" value="UniProtKB-SubCell"/>
</dbReference>
<dbReference type="GO" id="GO:0003949">
    <property type="term" value="F:1-(5-phosphoribosyl)-5-[(5-phosphoribosylamino)methylideneamino]imidazole-4-carboxamide isomerase activity"/>
    <property type="evidence" value="ECO:0007669"/>
    <property type="project" value="UniProtKB-UniRule"/>
</dbReference>
<dbReference type="GO" id="GO:0000105">
    <property type="term" value="P:L-histidine biosynthetic process"/>
    <property type="evidence" value="ECO:0007669"/>
    <property type="project" value="UniProtKB-UniRule"/>
</dbReference>
<dbReference type="GO" id="GO:0000162">
    <property type="term" value="P:L-tryptophan biosynthetic process"/>
    <property type="evidence" value="ECO:0007669"/>
    <property type="project" value="TreeGrafter"/>
</dbReference>
<dbReference type="CDD" id="cd04732">
    <property type="entry name" value="HisA"/>
    <property type="match status" value="1"/>
</dbReference>
<dbReference type="FunFam" id="3.20.20.70:FF:000009">
    <property type="entry name" value="1-(5-phosphoribosyl)-5-[(5-phosphoribosylamino)methylideneamino] imidazole-4-carboxamide isomerase"/>
    <property type="match status" value="1"/>
</dbReference>
<dbReference type="Gene3D" id="3.20.20.70">
    <property type="entry name" value="Aldolase class I"/>
    <property type="match status" value="1"/>
</dbReference>
<dbReference type="HAMAP" id="MF_01014">
    <property type="entry name" value="HisA"/>
    <property type="match status" value="1"/>
</dbReference>
<dbReference type="InterPro" id="IPR013785">
    <property type="entry name" value="Aldolase_TIM"/>
</dbReference>
<dbReference type="InterPro" id="IPR006062">
    <property type="entry name" value="His_biosynth"/>
</dbReference>
<dbReference type="InterPro" id="IPR006063">
    <property type="entry name" value="HisA_bact_arch"/>
</dbReference>
<dbReference type="InterPro" id="IPR044524">
    <property type="entry name" value="Isoase_HisA-like"/>
</dbReference>
<dbReference type="InterPro" id="IPR023016">
    <property type="entry name" value="Isoase_HisA-like_bact"/>
</dbReference>
<dbReference type="InterPro" id="IPR011060">
    <property type="entry name" value="RibuloseP-bd_barrel"/>
</dbReference>
<dbReference type="NCBIfam" id="TIGR00007">
    <property type="entry name" value="1-(5-phosphoribosyl)-5-[(5-phosphoribosylamino)methylideneamino]imidazole-4-carboxamide isomerase"/>
    <property type="match status" value="1"/>
</dbReference>
<dbReference type="PANTHER" id="PTHR43090">
    <property type="entry name" value="1-(5-PHOSPHORIBOSYL)-5-[(5-PHOSPHORIBOSYLAMINO)METHYLIDENEAMINO] IMIDAZOLE-4-CARBOXAMIDE ISOMERASE"/>
    <property type="match status" value="1"/>
</dbReference>
<dbReference type="PANTHER" id="PTHR43090:SF2">
    <property type="entry name" value="1-(5-PHOSPHORIBOSYL)-5-[(5-PHOSPHORIBOSYLAMINO)METHYLIDENEAMINO] IMIDAZOLE-4-CARBOXAMIDE ISOMERASE"/>
    <property type="match status" value="1"/>
</dbReference>
<dbReference type="Pfam" id="PF00977">
    <property type="entry name" value="His_biosynth"/>
    <property type="match status" value="1"/>
</dbReference>
<dbReference type="SUPFAM" id="SSF51366">
    <property type="entry name" value="Ribulose-phoshate binding barrel"/>
    <property type="match status" value="1"/>
</dbReference>
<protein>
    <recommendedName>
        <fullName evidence="1">1-(5-phosphoribosyl)-5-[(5-phosphoribosylamino)methylideneamino] imidazole-4-carboxamide isomerase</fullName>
        <ecNumber evidence="1">5.3.1.16</ecNumber>
    </recommendedName>
    <alternativeName>
        <fullName evidence="1">Phosphoribosylformimino-5-aminoimidazole carboxamide ribotide isomerase</fullName>
    </alternativeName>
</protein>
<evidence type="ECO:0000255" key="1">
    <source>
        <dbReference type="HAMAP-Rule" id="MF_01014"/>
    </source>
</evidence>
<evidence type="ECO:0000305" key="2"/>
<organism>
    <name type="scientific">Escherichia coli (strain UTI89 / UPEC)</name>
    <dbReference type="NCBI Taxonomy" id="364106"/>
    <lineage>
        <taxon>Bacteria</taxon>
        <taxon>Pseudomonadati</taxon>
        <taxon>Pseudomonadota</taxon>
        <taxon>Gammaproteobacteria</taxon>
        <taxon>Enterobacterales</taxon>
        <taxon>Enterobacteriaceae</taxon>
        <taxon>Escherichia</taxon>
    </lineage>
</organism>
<feature type="chain" id="PRO_0000290472" description="1-(5-phosphoribosyl)-5-[(5-phosphoribosylamino)methylideneamino] imidazole-4-carboxamide isomerase">
    <location>
        <begin position="1"/>
        <end position="245"/>
    </location>
</feature>
<feature type="active site" description="Proton acceptor" evidence="1">
    <location>
        <position position="7"/>
    </location>
</feature>
<feature type="active site" description="Proton donor" evidence="1">
    <location>
        <position position="129"/>
    </location>
</feature>